<sequence length="635" mass="68877">MGKIIGIDLGTTNSCVAIMDGTKARVLENSEGDRTTPSIIAYTQDGETLVGQPAKRQAVTNPQNTLFAIKRLIGRRFQDEEAQRDKDIMPYKIIAADNGDAWLEVKGQKIAPPQISAEVLKKMKKTAEDYLGEPVTEAVITVPAYFNDAQRQATKDAGRIAGLEVKRIINEPTAAALAYGLDKEVGNRTIAVYDLGGGTFDISIIEIDEVDGEKTFEVLATNGDTHLGGEDFDSRLINYLVEEFKKDQGMDLRTDPLAMQRLKEAAEKAKIELSSAQQTDVNLPYITADGSGPKHMNIKVTRAKLESLVEDLVNRSIEPLKVALQDAGLSVSDIQDVILVGGQTRMPMVQKKVADFFGKEPRKDVNPDEAVAIGAAVQGGVLSGEVKDVLLLDVTPLSLGIETMGGVMTPLITKNTTIPTKHSQVFSTAEDNQSAVTIHVLQGERKRAQDNKSLGQFNLDGIQPAPRGMAQIEVTFDIDADGILHVSAKDKNTGREQKITIKASSGLNEEEIQKMVRDAEANAEADRKFEELVQTRNQADHLIHGTRKQLEEAGDKLPAEDKTAIEDAVKALEAALKSEDKAEIEAKTQALVQVSGKLLEMAQQQAAAGGDAGDTSAKKEDDVVDAEFEEVKDKK</sequence>
<protein>
    <recommendedName>
        <fullName evidence="1">Chaperone protein DnaK</fullName>
    </recommendedName>
    <alternativeName>
        <fullName evidence="1">HSP70</fullName>
    </alternativeName>
    <alternativeName>
        <fullName evidence="1">Heat shock 70 kDa protein</fullName>
    </alternativeName>
    <alternativeName>
        <fullName evidence="1">Heat shock protein 70</fullName>
    </alternativeName>
</protein>
<dbReference type="EMBL" id="AM286415">
    <property type="protein sequence ID" value="CAL10723.1"/>
    <property type="molecule type" value="Genomic_DNA"/>
</dbReference>
<dbReference type="RefSeq" id="WP_011815538.1">
    <property type="nucleotide sequence ID" value="NC_008800.1"/>
</dbReference>
<dbReference type="RefSeq" id="YP_001004963.1">
    <property type="nucleotide sequence ID" value="NC_008800.1"/>
</dbReference>
<dbReference type="SMR" id="A1JJD5"/>
<dbReference type="GeneID" id="93972599"/>
<dbReference type="KEGG" id="yen:YE0609"/>
<dbReference type="PATRIC" id="fig|393305.7.peg.704"/>
<dbReference type="eggNOG" id="COG0443">
    <property type="taxonomic scope" value="Bacteria"/>
</dbReference>
<dbReference type="HOGENOM" id="CLU_005965_2_1_6"/>
<dbReference type="OrthoDB" id="9766019at2"/>
<dbReference type="Proteomes" id="UP000000642">
    <property type="component" value="Chromosome"/>
</dbReference>
<dbReference type="GO" id="GO:0005524">
    <property type="term" value="F:ATP binding"/>
    <property type="evidence" value="ECO:0007669"/>
    <property type="project" value="UniProtKB-UniRule"/>
</dbReference>
<dbReference type="GO" id="GO:0140662">
    <property type="term" value="F:ATP-dependent protein folding chaperone"/>
    <property type="evidence" value="ECO:0007669"/>
    <property type="project" value="InterPro"/>
</dbReference>
<dbReference type="GO" id="GO:0051082">
    <property type="term" value="F:unfolded protein binding"/>
    <property type="evidence" value="ECO:0007669"/>
    <property type="project" value="InterPro"/>
</dbReference>
<dbReference type="CDD" id="cd10234">
    <property type="entry name" value="ASKHA_NBD_HSP70_DnaK-like"/>
    <property type="match status" value="1"/>
</dbReference>
<dbReference type="FunFam" id="2.60.34.10:FF:000014">
    <property type="entry name" value="Chaperone protein DnaK HSP70"/>
    <property type="match status" value="1"/>
</dbReference>
<dbReference type="FunFam" id="1.20.1270.10:FF:000001">
    <property type="entry name" value="Molecular chaperone DnaK"/>
    <property type="match status" value="1"/>
</dbReference>
<dbReference type="FunFam" id="3.30.420.40:FF:000004">
    <property type="entry name" value="Molecular chaperone DnaK"/>
    <property type="match status" value="1"/>
</dbReference>
<dbReference type="FunFam" id="3.90.640.10:FF:000003">
    <property type="entry name" value="Molecular chaperone DnaK"/>
    <property type="match status" value="1"/>
</dbReference>
<dbReference type="Gene3D" id="1.20.1270.10">
    <property type="match status" value="1"/>
</dbReference>
<dbReference type="Gene3D" id="3.30.420.40">
    <property type="match status" value="2"/>
</dbReference>
<dbReference type="Gene3D" id="3.90.640.10">
    <property type="entry name" value="Actin, Chain A, domain 4"/>
    <property type="match status" value="1"/>
</dbReference>
<dbReference type="Gene3D" id="2.60.34.10">
    <property type="entry name" value="Substrate Binding Domain Of DNAk, Chain A, domain 1"/>
    <property type="match status" value="1"/>
</dbReference>
<dbReference type="HAMAP" id="MF_00332">
    <property type="entry name" value="DnaK"/>
    <property type="match status" value="1"/>
</dbReference>
<dbReference type="InterPro" id="IPR043129">
    <property type="entry name" value="ATPase_NBD"/>
</dbReference>
<dbReference type="InterPro" id="IPR012725">
    <property type="entry name" value="Chaperone_DnaK"/>
</dbReference>
<dbReference type="InterPro" id="IPR018181">
    <property type="entry name" value="Heat_shock_70_CS"/>
</dbReference>
<dbReference type="InterPro" id="IPR029048">
    <property type="entry name" value="HSP70_C_sf"/>
</dbReference>
<dbReference type="InterPro" id="IPR029047">
    <property type="entry name" value="HSP70_peptide-bd_sf"/>
</dbReference>
<dbReference type="InterPro" id="IPR013126">
    <property type="entry name" value="Hsp_70_fam"/>
</dbReference>
<dbReference type="NCBIfam" id="NF001413">
    <property type="entry name" value="PRK00290.1"/>
    <property type="match status" value="1"/>
</dbReference>
<dbReference type="NCBIfam" id="NF003520">
    <property type="entry name" value="PRK05183.1"/>
    <property type="match status" value="1"/>
</dbReference>
<dbReference type="NCBIfam" id="TIGR02350">
    <property type="entry name" value="prok_dnaK"/>
    <property type="match status" value="1"/>
</dbReference>
<dbReference type="PANTHER" id="PTHR19375">
    <property type="entry name" value="HEAT SHOCK PROTEIN 70KDA"/>
    <property type="match status" value="1"/>
</dbReference>
<dbReference type="Pfam" id="PF00012">
    <property type="entry name" value="HSP70"/>
    <property type="match status" value="1"/>
</dbReference>
<dbReference type="PRINTS" id="PR00301">
    <property type="entry name" value="HEATSHOCK70"/>
</dbReference>
<dbReference type="SUPFAM" id="SSF53067">
    <property type="entry name" value="Actin-like ATPase domain"/>
    <property type="match status" value="2"/>
</dbReference>
<dbReference type="SUPFAM" id="SSF100934">
    <property type="entry name" value="Heat shock protein 70kD (HSP70), C-terminal subdomain"/>
    <property type="match status" value="1"/>
</dbReference>
<dbReference type="SUPFAM" id="SSF100920">
    <property type="entry name" value="Heat shock protein 70kD (HSP70), peptide-binding domain"/>
    <property type="match status" value="1"/>
</dbReference>
<dbReference type="PROSITE" id="PS00297">
    <property type="entry name" value="HSP70_1"/>
    <property type="match status" value="1"/>
</dbReference>
<dbReference type="PROSITE" id="PS00329">
    <property type="entry name" value="HSP70_2"/>
    <property type="match status" value="1"/>
</dbReference>
<dbReference type="PROSITE" id="PS01036">
    <property type="entry name" value="HSP70_3"/>
    <property type="match status" value="1"/>
</dbReference>
<proteinExistence type="inferred from homology"/>
<gene>
    <name evidence="1" type="primary">dnaK</name>
    <name type="ordered locus">YE0609</name>
</gene>
<name>DNAK_YERE8</name>
<organism>
    <name type="scientific">Yersinia enterocolitica serotype O:8 / biotype 1B (strain NCTC 13174 / 8081)</name>
    <dbReference type="NCBI Taxonomy" id="393305"/>
    <lineage>
        <taxon>Bacteria</taxon>
        <taxon>Pseudomonadati</taxon>
        <taxon>Pseudomonadota</taxon>
        <taxon>Gammaproteobacteria</taxon>
        <taxon>Enterobacterales</taxon>
        <taxon>Yersiniaceae</taxon>
        <taxon>Yersinia</taxon>
    </lineage>
</organism>
<feature type="chain" id="PRO_1000059699" description="Chaperone protein DnaK">
    <location>
        <begin position="1"/>
        <end position="635"/>
    </location>
</feature>
<feature type="region of interest" description="Disordered" evidence="2">
    <location>
        <begin position="602"/>
        <end position="635"/>
    </location>
</feature>
<feature type="modified residue" description="Phosphothreonine; by autocatalysis" evidence="1">
    <location>
        <position position="199"/>
    </location>
</feature>
<keyword id="KW-0067">ATP-binding</keyword>
<keyword id="KW-0143">Chaperone</keyword>
<keyword id="KW-0547">Nucleotide-binding</keyword>
<keyword id="KW-0597">Phosphoprotein</keyword>
<keyword id="KW-0346">Stress response</keyword>
<evidence type="ECO:0000255" key="1">
    <source>
        <dbReference type="HAMAP-Rule" id="MF_00332"/>
    </source>
</evidence>
<evidence type="ECO:0000256" key="2">
    <source>
        <dbReference type="SAM" id="MobiDB-lite"/>
    </source>
</evidence>
<accession>A1JJD5</accession>
<reference key="1">
    <citation type="journal article" date="2006" name="PLoS Genet.">
        <title>The complete genome sequence and comparative genome analysis of the high pathogenicity Yersinia enterocolitica strain 8081.</title>
        <authorList>
            <person name="Thomson N.R."/>
            <person name="Howard S."/>
            <person name="Wren B.W."/>
            <person name="Holden M.T.G."/>
            <person name="Crossman L."/>
            <person name="Challis G.L."/>
            <person name="Churcher C."/>
            <person name="Mungall K."/>
            <person name="Brooks K."/>
            <person name="Chillingworth T."/>
            <person name="Feltwell T."/>
            <person name="Abdellah Z."/>
            <person name="Hauser H."/>
            <person name="Jagels K."/>
            <person name="Maddison M."/>
            <person name="Moule S."/>
            <person name="Sanders M."/>
            <person name="Whitehead S."/>
            <person name="Quail M.A."/>
            <person name="Dougan G."/>
            <person name="Parkhill J."/>
            <person name="Prentice M.B."/>
        </authorList>
    </citation>
    <scope>NUCLEOTIDE SEQUENCE [LARGE SCALE GENOMIC DNA]</scope>
    <source>
        <strain>NCTC 13174 / 8081</strain>
    </source>
</reference>
<comment type="function">
    <text evidence="1">Acts as a chaperone.</text>
</comment>
<comment type="induction">
    <text evidence="1">By stress conditions e.g. heat shock.</text>
</comment>
<comment type="similarity">
    <text evidence="1">Belongs to the heat shock protein 70 family.</text>
</comment>